<dbReference type="EC" id="2.5.1.7" evidence="1"/>
<dbReference type="EMBL" id="CP000024">
    <property type="protein sequence ID" value="AAV62715.1"/>
    <property type="status" value="ALT_INIT"/>
    <property type="molecule type" value="Genomic_DNA"/>
</dbReference>
<dbReference type="RefSeq" id="WP_041827046.1">
    <property type="nucleotide sequence ID" value="NC_006449.1"/>
</dbReference>
<dbReference type="SMR" id="Q5LZI4"/>
<dbReference type="KEGG" id="stc:str1167"/>
<dbReference type="HOGENOM" id="CLU_027387_0_0_9"/>
<dbReference type="UniPathway" id="UPA00219"/>
<dbReference type="GO" id="GO:0005737">
    <property type="term" value="C:cytoplasm"/>
    <property type="evidence" value="ECO:0007669"/>
    <property type="project" value="UniProtKB-SubCell"/>
</dbReference>
<dbReference type="GO" id="GO:0008760">
    <property type="term" value="F:UDP-N-acetylglucosamine 1-carboxyvinyltransferase activity"/>
    <property type="evidence" value="ECO:0007669"/>
    <property type="project" value="UniProtKB-UniRule"/>
</dbReference>
<dbReference type="GO" id="GO:0051301">
    <property type="term" value="P:cell division"/>
    <property type="evidence" value="ECO:0007669"/>
    <property type="project" value="UniProtKB-KW"/>
</dbReference>
<dbReference type="GO" id="GO:0071555">
    <property type="term" value="P:cell wall organization"/>
    <property type="evidence" value="ECO:0007669"/>
    <property type="project" value="UniProtKB-KW"/>
</dbReference>
<dbReference type="GO" id="GO:0009252">
    <property type="term" value="P:peptidoglycan biosynthetic process"/>
    <property type="evidence" value="ECO:0007669"/>
    <property type="project" value="UniProtKB-UniRule"/>
</dbReference>
<dbReference type="GO" id="GO:0008360">
    <property type="term" value="P:regulation of cell shape"/>
    <property type="evidence" value="ECO:0007669"/>
    <property type="project" value="UniProtKB-KW"/>
</dbReference>
<dbReference type="GO" id="GO:0019277">
    <property type="term" value="P:UDP-N-acetylgalactosamine biosynthetic process"/>
    <property type="evidence" value="ECO:0007669"/>
    <property type="project" value="InterPro"/>
</dbReference>
<dbReference type="CDD" id="cd01555">
    <property type="entry name" value="UdpNAET"/>
    <property type="match status" value="1"/>
</dbReference>
<dbReference type="FunFam" id="3.65.10.10:FF:000001">
    <property type="entry name" value="UDP-N-acetylglucosamine 1-carboxyvinyltransferase"/>
    <property type="match status" value="1"/>
</dbReference>
<dbReference type="Gene3D" id="3.65.10.10">
    <property type="entry name" value="Enolpyruvate transferase domain"/>
    <property type="match status" value="2"/>
</dbReference>
<dbReference type="HAMAP" id="MF_00111">
    <property type="entry name" value="MurA"/>
    <property type="match status" value="1"/>
</dbReference>
<dbReference type="InterPro" id="IPR001986">
    <property type="entry name" value="Enolpyruvate_Tfrase_dom"/>
</dbReference>
<dbReference type="InterPro" id="IPR036968">
    <property type="entry name" value="Enolpyruvate_Tfrase_sf"/>
</dbReference>
<dbReference type="InterPro" id="IPR050068">
    <property type="entry name" value="MurA_subfamily"/>
</dbReference>
<dbReference type="InterPro" id="IPR013792">
    <property type="entry name" value="RNA3'P_cycl/enolpyr_Trfase_a/b"/>
</dbReference>
<dbReference type="InterPro" id="IPR005750">
    <property type="entry name" value="UDP_GlcNAc_COvinyl_MurA"/>
</dbReference>
<dbReference type="NCBIfam" id="TIGR01072">
    <property type="entry name" value="murA"/>
    <property type="match status" value="1"/>
</dbReference>
<dbReference type="NCBIfam" id="NF006873">
    <property type="entry name" value="PRK09369.1"/>
    <property type="match status" value="1"/>
</dbReference>
<dbReference type="PANTHER" id="PTHR43783">
    <property type="entry name" value="UDP-N-ACETYLGLUCOSAMINE 1-CARBOXYVINYLTRANSFERASE"/>
    <property type="match status" value="1"/>
</dbReference>
<dbReference type="PANTHER" id="PTHR43783:SF1">
    <property type="entry name" value="UDP-N-ACETYLGLUCOSAMINE 1-CARBOXYVINYLTRANSFERASE"/>
    <property type="match status" value="1"/>
</dbReference>
<dbReference type="Pfam" id="PF00275">
    <property type="entry name" value="EPSP_synthase"/>
    <property type="match status" value="1"/>
</dbReference>
<dbReference type="SUPFAM" id="SSF55205">
    <property type="entry name" value="EPT/RTPC-like"/>
    <property type="match status" value="1"/>
</dbReference>
<name>MURA1_STRT1</name>
<proteinExistence type="inferred from homology"/>
<keyword id="KW-0131">Cell cycle</keyword>
<keyword id="KW-0132">Cell division</keyword>
<keyword id="KW-0133">Cell shape</keyword>
<keyword id="KW-0961">Cell wall biogenesis/degradation</keyword>
<keyword id="KW-0963">Cytoplasm</keyword>
<keyword id="KW-0573">Peptidoglycan synthesis</keyword>
<keyword id="KW-0670">Pyruvate</keyword>
<keyword id="KW-0808">Transferase</keyword>
<accession>Q5LZI4</accession>
<gene>
    <name evidence="1" type="primary">murA1</name>
    <name type="synonym">murA</name>
    <name type="ordered locus">str1167</name>
</gene>
<organism>
    <name type="scientific">Streptococcus thermophilus (strain CNRZ 1066)</name>
    <dbReference type="NCBI Taxonomy" id="299768"/>
    <lineage>
        <taxon>Bacteria</taxon>
        <taxon>Bacillati</taxon>
        <taxon>Bacillota</taxon>
        <taxon>Bacilli</taxon>
        <taxon>Lactobacillales</taxon>
        <taxon>Streptococcaceae</taxon>
        <taxon>Streptococcus</taxon>
    </lineage>
</organism>
<sequence length="423" mass="45182">MDKIIVKGGNTRLSGEVVIEGAKNAVLPLLAATILASEGQTTLTNVPILSDVYTMNNVVRGLDIAVDFDEENNTVVVDASGEILDQAPYEYVSKMRASIVVLGPILARNGHAKVSMPGGCTIGSRPIDLHLKGLEAMGAKITQVGGDITATAEKLKGATIYMDFPSVGATQNLMMAATLADGVTTIENAAREPEIVDLAILLNEMGANVKGAGTEKLVIKGVKSLHGTQHAVIQDRIEAGTFMVAAAMTSGNVLIKDAIWEHNRPLISKLLEMGVDVKEEDRGIRVKSDVSKLKPVAVKTLPHPGFPTDMQAQFTALMAVVKGKSSISETVFENRFQHLEEMRRMGLHSEILRDTAMIHGGLPLQGARVMSTDLRASAALILTGMVAEGTTTVGKLTHLDRGYYKFHEKLAKLGAQISRVSEA</sequence>
<evidence type="ECO:0000255" key="1">
    <source>
        <dbReference type="HAMAP-Rule" id="MF_00111"/>
    </source>
</evidence>
<evidence type="ECO:0000305" key="2"/>
<protein>
    <recommendedName>
        <fullName evidence="1">UDP-N-acetylglucosamine 1-carboxyvinyltransferase 1</fullName>
        <ecNumber evidence="1">2.5.1.7</ecNumber>
    </recommendedName>
    <alternativeName>
        <fullName evidence="1">Enoylpyruvate transferase 1</fullName>
    </alternativeName>
    <alternativeName>
        <fullName evidence="1">UDP-N-acetylglucosamine enolpyruvyl transferase 1</fullName>
        <shortName evidence="1">EPT 1</shortName>
    </alternativeName>
</protein>
<comment type="function">
    <text evidence="1">Cell wall formation. Adds enolpyruvyl to UDP-N-acetylglucosamine.</text>
</comment>
<comment type="catalytic activity">
    <reaction evidence="1">
        <text>phosphoenolpyruvate + UDP-N-acetyl-alpha-D-glucosamine = UDP-N-acetyl-3-O-(1-carboxyvinyl)-alpha-D-glucosamine + phosphate</text>
        <dbReference type="Rhea" id="RHEA:18681"/>
        <dbReference type="ChEBI" id="CHEBI:43474"/>
        <dbReference type="ChEBI" id="CHEBI:57705"/>
        <dbReference type="ChEBI" id="CHEBI:58702"/>
        <dbReference type="ChEBI" id="CHEBI:68483"/>
        <dbReference type="EC" id="2.5.1.7"/>
    </reaction>
</comment>
<comment type="pathway">
    <text evidence="1">Cell wall biogenesis; peptidoglycan biosynthesis.</text>
</comment>
<comment type="subcellular location">
    <subcellularLocation>
        <location evidence="1">Cytoplasm</location>
    </subcellularLocation>
</comment>
<comment type="similarity">
    <text evidence="1">Belongs to the EPSP synthase family. MurA subfamily.</text>
</comment>
<comment type="sequence caution" evidence="2">
    <conflict type="erroneous initiation">
        <sequence resource="EMBL-CDS" id="AAV62715"/>
    </conflict>
</comment>
<reference key="1">
    <citation type="journal article" date="2004" name="Nat. Biotechnol.">
        <title>Complete sequence and comparative genome analysis of the dairy bacterium Streptococcus thermophilus.</title>
        <authorList>
            <person name="Bolotin A."/>
            <person name="Quinquis B."/>
            <person name="Renault P."/>
            <person name="Sorokin A."/>
            <person name="Ehrlich S.D."/>
            <person name="Kulakauskas S."/>
            <person name="Lapidus A."/>
            <person name="Goltsman E."/>
            <person name="Mazur M."/>
            <person name="Pusch G.D."/>
            <person name="Fonstein M."/>
            <person name="Overbeek R."/>
            <person name="Kyprides N."/>
            <person name="Purnelle B."/>
            <person name="Prozzi D."/>
            <person name="Ngui K."/>
            <person name="Masuy D."/>
            <person name="Hancy F."/>
            <person name="Burteau S."/>
            <person name="Boutry M."/>
            <person name="Delcour J."/>
            <person name="Goffeau A."/>
            <person name="Hols P."/>
        </authorList>
    </citation>
    <scope>NUCLEOTIDE SEQUENCE [LARGE SCALE GENOMIC DNA]</scope>
    <source>
        <strain>CNRZ 1066</strain>
    </source>
</reference>
<feature type="chain" id="PRO_0000231284" description="UDP-N-acetylglucosamine 1-carboxyvinyltransferase 1">
    <location>
        <begin position="1"/>
        <end position="423"/>
    </location>
</feature>
<feature type="active site" description="Proton donor" evidence="1">
    <location>
        <position position="120"/>
    </location>
</feature>
<feature type="binding site" evidence="1">
    <location>
        <begin position="23"/>
        <end position="24"/>
    </location>
    <ligand>
        <name>phosphoenolpyruvate</name>
        <dbReference type="ChEBI" id="CHEBI:58702"/>
    </ligand>
</feature>
<feature type="binding site" evidence="1">
    <location>
        <position position="96"/>
    </location>
    <ligand>
        <name>UDP-N-acetyl-alpha-D-glucosamine</name>
        <dbReference type="ChEBI" id="CHEBI:57705"/>
    </ligand>
</feature>
<feature type="binding site" evidence="1">
    <location>
        <begin position="125"/>
        <end position="129"/>
    </location>
    <ligand>
        <name>UDP-N-acetyl-alpha-D-glucosamine</name>
        <dbReference type="ChEBI" id="CHEBI:57705"/>
    </ligand>
</feature>
<feature type="binding site" evidence="1">
    <location>
        <position position="309"/>
    </location>
    <ligand>
        <name>UDP-N-acetyl-alpha-D-glucosamine</name>
        <dbReference type="ChEBI" id="CHEBI:57705"/>
    </ligand>
</feature>
<feature type="binding site" evidence="1">
    <location>
        <position position="331"/>
    </location>
    <ligand>
        <name>UDP-N-acetyl-alpha-D-glucosamine</name>
        <dbReference type="ChEBI" id="CHEBI:57705"/>
    </ligand>
</feature>
<feature type="modified residue" description="2-(S-cysteinyl)pyruvic acid O-phosphothioketal" evidence="1">
    <location>
        <position position="120"/>
    </location>
</feature>